<accession>B9DSV8</accession>
<keyword id="KW-1185">Reference proteome</keyword>
<keyword id="KW-0687">Ribonucleoprotein</keyword>
<keyword id="KW-0689">Ribosomal protein</keyword>
<comment type="similarity">
    <text evidence="1">Belongs to the universal ribosomal protein uL29 family.</text>
</comment>
<reference key="1">
    <citation type="journal article" date="2009" name="BMC Genomics">
        <title>Evidence for niche adaptation in the genome of the bovine pathogen Streptococcus uberis.</title>
        <authorList>
            <person name="Ward P.N."/>
            <person name="Holden M.T.G."/>
            <person name="Leigh J.A."/>
            <person name="Lennard N."/>
            <person name="Bignell A."/>
            <person name="Barron A."/>
            <person name="Clark L."/>
            <person name="Quail M.A."/>
            <person name="Woodward J."/>
            <person name="Barrell B.G."/>
            <person name="Egan S.A."/>
            <person name="Field T.R."/>
            <person name="Maskell D."/>
            <person name="Kehoe M."/>
            <person name="Dowson C.G."/>
            <person name="Chanter N."/>
            <person name="Whatmore A.M."/>
            <person name="Bentley S.D."/>
            <person name="Parkhill J."/>
        </authorList>
    </citation>
    <scope>NUCLEOTIDE SEQUENCE [LARGE SCALE GENOMIC DNA]</scope>
    <source>
        <strain>ATCC BAA-854 / 0140J</strain>
    </source>
</reference>
<evidence type="ECO:0000255" key="1">
    <source>
        <dbReference type="HAMAP-Rule" id="MF_00374"/>
    </source>
</evidence>
<evidence type="ECO:0000305" key="2"/>
<dbReference type="EMBL" id="AM946015">
    <property type="protein sequence ID" value="CAR40454.1"/>
    <property type="molecule type" value="Genomic_DNA"/>
</dbReference>
<dbReference type="RefSeq" id="WP_003046054.1">
    <property type="nucleotide sequence ID" value="NC_012004.1"/>
</dbReference>
<dbReference type="SMR" id="B9DSV8"/>
<dbReference type="STRING" id="218495.SUB0076"/>
<dbReference type="GeneID" id="93825302"/>
<dbReference type="KEGG" id="sub:SUB0076"/>
<dbReference type="eggNOG" id="COG0255">
    <property type="taxonomic scope" value="Bacteria"/>
</dbReference>
<dbReference type="HOGENOM" id="CLU_158491_5_2_9"/>
<dbReference type="OrthoDB" id="9815192at2"/>
<dbReference type="Proteomes" id="UP000000449">
    <property type="component" value="Chromosome"/>
</dbReference>
<dbReference type="GO" id="GO:0022625">
    <property type="term" value="C:cytosolic large ribosomal subunit"/>
    <property type="evidence" value="ECO:0007669"/>
    <property type="project" value="TreeGrafter"/>
</dbReference>
<dbReference type="GO" id="GO:0003735">
    <property type="term" value="F:structural constituent of ribosome"/>
    <property type="evidence" value="ECO:0007669"/>
    <property type="project" value="InterPro"/>
</dbReference>
<dbReference type="GO" id="GO:0006412">
    <property type="term" value="P:translation"/>
    <property type="evidence" value="ECO:0007669"/>
    <property type="project" value="UniProtKB-UniRule"/>
</dbReference>
<dbReference type="CDD" id="cd00427">
    <property type="entry name" value="Ribosomal_L29_HIP"/>
    <property type="match status" value="1"/>
</dbReference>
<dbReference type="FunFam" id="1.10.287.310:FF:000001">
    <property type="entry name" value="50S ribosomal protein L29"/>
    <property type="match status" value="1"/>
</dbReference>
<dbReference type="Gene3D" id="1.10.287.310">
    <property type="match status" value="1"/>
</dbReference>
<dbReference type="HAMAP" id="MF_00374">
    <property type="entry name" value="Ribosomal_uL29"/>
    <property type="match status" value="1"/>
</dbReference>
<dbReference type="InterPro" id="IPR050063">
    <property type="entry name" value="Ribosomal_protein_uL29"/>
</dbReference>
<dbReference type="InterPro" id="IPR001854">
    <property type="entry name" value="Ribosomal_uL29"/>
</dbReference>
<dbReference type="InterPro" id="IPR018254">
    <property type="entry name" value="Ribosomal_uL29_CS"/>
</dbReference>
<dbReference type="InterPro" id="IPR036049">
    <property type="entry name" value="Ribosomal_uL29_sf"/>
</dbReference>
<dbReference type="NCBIfam" id="TIGR00012">
    <property type="entry name" value="L29"/>
    <property type="match status" value="1"/>
</dbReference>
<dbReference type="PANTHER" id="PTHR10916">
    <property type="entry name" value="60S RIBOSOMAL PROTEIN L35/50S RIBOSOMAL PROTEIN L29"/>
    <property type="match status" value="1"/>
</dbReference>
<dbReference type="PANTHER" id="PTHR10916:SF0">
    <property type="entry name" value="LARGE RIBOSOMAL SUBUNIT PROTEIN UL29C"/>
    <property type="match status" value="1"/>
</dbReference>
<dbReference type="Pfam" id="PF00831">
    <property type="entry name" value="Ribosomal_L29"/>
    <property type="match status" value="1"/>
</dbReference>
<dbReference type="SUPFAM" id="SSF46561">
    <property type="entry name" value="Ribosomal protein L29 (L29p)"/>
    <property type="match status" value="1"/>
</dbReference>
<dbReference type="PROSITE" id="PS00579">
    <property type="entry name" value="RIBOSOMAL_L29"/>
    <property type="match status" value="1"/>
</dbReference>
<organism>
    <name type="scientific">Streptococcus uberis (strain ATCC BAA-854 / 0140J)</name>
    <dbReference type="NCBI Taxonomy" id="218495"/>
    <lineage>
        <taxon>Bacteria</taxon>
        <taxon>Bacillati</taxon>
        <taxon>Bacillota</taxon>
        <taxon>Bacilli</taxon>
        <taxon>Lactobacillales</taxon>
        <taxon>Streptococcaceae</taxon>
        <taxon>Streptococcus</taxon>
    </lineage>
</organism>
<proteinExistence type="inferred from homology"/>
<gene>
    <name evidence="1" type="primary">rpmC</name>
    <name type="ordered locus">SUB0076</name>
</gene>
<name>RL29_STRU0</name>
<protein>
    <recommendedName>
        <fullName evidence="1">Large ribosomal subunit protein uL29</fullName>
    </recommendedName>
    <alternativeName>
        <fullName evidence="2">50S ribosomal protein L29</fullName>
    </alternativeName>
</protein>
<feature type="chain" id="PRO_1000194039" description="Large ribosomal subunit protein uL29">
    <location>
        <begin position="1"/>
        <end position="68"/>
    </location>
</feature>
<sequence length="68" mass="7904">MKLEEIKKFVAELRGLSQEELAKKENELKKELFDLRFQAAAGQLDQTARLNEVKKQIARVKTVQSEMK</sequence>